<proteinExistence type="inferred from homology"/>
<accession>A0K867</accession>
<name>ISPD_BURCH</name>
<dbReference type="EC" id="2.7.7.60" evidence="1"/>
<dbReference type="EMBL" id="CP000458">
    <property type="protein sequence ID" value="ABK08694.1"/>
    <property type="molecule type" value="Genomic_DNA"/>
</dbReference>
<dbReference type="RefSeq" id="WP_011549596.1">
    <property type="nucleotide sequence ID" value="NC_008542.1"/>
</dbReference>
<dbReference type="SMR" id="A0K867"/>
<dbReference type="KEGG" id="bch:Bcen2424_1943"/>
<dbReference type="HOGENOM" id="CLU_061281_3_0_4"/>
<dbReference type="UniPathway" id="UPA00056">
    <property type="reaction ID" value="UER00093"/>
</dbReference>
<dbReference type="GO" id="GO:0050518">
    <property type="term" value="F:2-C-methyl-D-erythritol 4-phosphate cytidylyltransferase activity"/>
    <property type="evidence" value="ECO:0007669"/>
    <property type="project" value="UniProtKB-UniRule"/>
</dbReference>
<dbReference type="GO" id="GO:0019288">
    <property type="term" value="P:isopentenyl diphosphate biosynthetic process, methylerythritol 4-phosphate pathway"/>
    <property type="evidence" value="ECO:0007669"/>
    <property type="project" value="UniProtKB-UniRule"/>
</dbReference>
<dbReference type="CDD" id="cd02516">
    <property type="entry name" value="CDP-ME_synthetase"/>
    <property type="match status" value="1"/>
</dbReference>
<dbReference type="FunFam" id="3.90.550.10:FF:000003">
    <property type="entry name" value="2-C-methyl-D-erythritol 4-phosphate cytidylyltransferase"/>
    <property type="match status" value="1"/>
</dbReference>
<dbReference type="Gene3D" id="3.90.550.10">
    <property type="entry name" value="Spore Coat Polysaccharide Biosynthesis Protein SpsA, Chain A"/>
    <property type="match status" value="1"/>
</dbReference>
<dbReference type="HAMAP" id="MF_00108">
    <property type="entry name" value="IspD"/>
    <property type="match status" value="1"/>
</dbReference>
<dbReference type="InterPro" id="IPR001228">
    <property type="entry name" value="IspD"/>
</dbReference>
<dbReference type="InterPro" id="IPR034683">
    <property type="entry name" value="IspD/TarI"/>
</dbReference>
<dbReference type="InterPro" id="IPR050088">
    <property type="entry name" value="IspD/TarI_cytidylyltransf_bact"/>
</dbReference>
<dbReference type="InterPro" id="IPR018294">
    <property type="entry name" value="ISPD_synthase_CS"/>
</dbReference>
<dbReference type="InterPro" id="IPR029044">
    <property type="entry name" value="Nucleotide-diphossugar_trans"/>
</dbReference>
<dbReference type="NCBIfam" id="TIGR00453">
    <property type="entry name" value="ispD"/>
    <property type="match status" value="1"/>
</dbReference>
<dbReference type="PANTHER" id="PTHR32125">
    <property type="entry name" value="2-C-METHYL-D-ERYTHRITOL 4-PHOSPHATE CYTIDYLYLTRANSFERASE, CHLOROPLASTIC"/>
    <property type="match status" value="1"/>
</dbReference>
<dbReference type="PANTHER" id="PTHR32125:SF4">
    <property type="entry name" value="2-C-METHYL-D-ERYTHRITOL 4-PHOSPHATE CYTIDYLYLTRANSFERASE, CHLOROPLASTIC"/>
    <property type="match status" value="1"/>
</dbReference>
<dbReference type="Pfam" id="PF01128">
    <property type="entry name" value="IspD"/>
    <property type="match status" value="1"/>
</dbReference>
<dbReference type="SUPFAM" id="SSF53448">
    <property type="entry name" value="Nucleotide-diphospho-sugar transferases"/>
    <property type="match status" value="1"/>
</dbReference>
<dbReference type="PROSITE" id="PS01295">
    <property type="entry name" value="ISPD"/>
    <property type="match status" value="1"/>
</dbReference>
<organism>
    <name type="scientific">Burkholderia cenocepacia (strain HI2424)</name>
    <dbReference type="NCBI Taxonomy" id="331272"/>
    <lineage>
        <taxon>Bacteria</taxon>
        <taxon>Pseudomonadati</taxon>
        <taxon>Pseudomonadota</taxon>
        <taxon>Betaproteobacteria</taxon>
        <taxon>Burkholderiales</taxon>
        <taxon>Burkholderiaceae</taxon>
        <taxon>Burkholderia</taxon>
        <taxon>Burkholderia cepacia complex</taxon>
    </lineage>
</organism>
<gene>
    <name evidence="1" type="primary">ispD</name>
    <name type="ordered locus">Bcen2424_1943</name>
</gene>
<reference key="1">
    <citation type="submission" date="2006-08" db="EMBL/GenBank/DDBJ databases">
        <title>Complete sequence of chromosome 1 of Burkholderia cenocepacia HI2424.</title>
        <authorList>
            <person name="Copeland A."/>
            <person name="Lucas S."/>
            <person name="Lapidus A."/>
            <person name="Barry K."/>
            <person name="Detter J.C."/>
            <person name="Glavina del Rio T."/>
            <person name="Hammon N."/>
            <person name="Israni S."/>
            <person name="Pitluck S."/>
            <person name="Chain P."/>
            <person name="Malfatti S."/>
            <person name="Shin M."/>
            <person name="Vergez L."/>
            <person name="Schmutz J."/>
            <person name="Larimer F."/>
            <person name="Land M."/>
            <person name="Hauser L."/>
            <person name="Kyrpides N."/>
            <person name="Kim E."/>
            <person name="LiPuma J.J."/>
            <person name="Gonzalez C.F."/>
            <person name="Konstantinidis K."/>
            <person name="Tiedje J.M."/>
            <person name="Richardson P."/>
        </authorList>
    </citation>
    <scope>NUCLEOTIDE SEQUENCE [LARGE SCALE GENOMIC DNA]</scope>
    <source>
        <strain>HI2424</strain>
    </source>
</reference>
<evidence type="ECO:0000255" key="1">
    <source>
        <dbReference type="HAMAP-Rule" id="MF_00108"/>
    </source>
</evidence>
<keyword id="KW-0414">Isoprene biosynthesis</keyword>
<keyword id="KW-0548">Nucleotidyltransferase</keyword>
<keyword id="KW-0808">Transferase</keyword>
<protein>
    <recommendedName>
        <fullName evidence="1">2-C-methyl-D-erythritol 4-phosphate cytidylyltransferase</fullName>
        <ecNumber evidence="1">2.7.7.60</ecNumber>
    </recommendedName>
    <alternativeName>
        <fullName evidence="1">4-diphosphocytidyl-2C-methyl-D-erythritol synthase</fullName>
    </alternativeName>
    <alternativeName>
        <fullName evidence="1">MEP cytidylyltransferase</fullName>
        <shortName evidence="1">MCT</shortName>
    </alternativeName>
</protein>
<feature type="chain" id="PRO_1000022902" description="2-C-methyl-D-erythritol 4-phosphate cytidylyltransferase">
    <location>
        <begin position="1"/>
        <end position="236"/>
    </location>
</feature>
<feature type="site" description="Transition state stabilizer" evidence="1">
    <location>
        <position position="17"/>
    </location>
</feature>
<feature type="site" description="Transition state stabilizer" evidence="1">
    <location>
        <position position="24"/>
    </location>
</feature>
<feature type="site" description="Positions MEP for the nucleophilic attack" evidence="1">
    <location>
        <position position="159"/>
    </location>
</feature>
<feature type="site" description="Positions MEP for the nucleophilic attack" evidence="1">
    <location>
        <position position="215"/>
    </location>
</feature>
<comment type="function">
    <text evidence="1">Catalyzes the formation of 4-diphosphocytidyl-2-C-methyl-D-erythritol from CTP and 2-C-methyl-D-erythritol 4-phosphate (MEP).</text>
</comment>
<comment type="catalytic activity">
    <reaction evidence="1">
        <text>2-C-methyl-D-erythritol 4-phosphate + CTP + H(+) = 4-CDP-2-C-methyl-D-erythritol + diphosphate</text>
        <dbReference type="Rhea" id="RHEA:13429"/>
        <dbReference type="ChEBI" id="CHEBI:15378"/>
        <dbReference type="ChEBI" id="CHEBI:33019"/>
        <dbReference type="ChEBI" id="CHEBI:37563"/>
        <dbReference type="ChEBI" id="CHEBI:57823"/>
        <dbReference type="ChEBI" id="CHEBI:58262"/>
        <dbReference type="EC" id="2.7.7.60"/>
    </reaction>
</comment>
<comment type="pathway">
    <text evidence="1">Isoprenoid biosynthesis; isopentenyl diphosphate biosynthesis via DXP pathway; isopentenyl diphosphate from 1-deoxy-D-xylulose 5-phosphate: step 2/6.</text>
</comment>
<comment type="similarity">
    <text evidence="1">Belongs to the IspD/TarI cytidylyltransferase family. IspD subfamily.</text>
</comment>
<sequence>MTPRLFALIPCAGTGSRSGSAVPKQYRTLAGRALLHYTLAAFDACSEFAQTLVVLAPDDSHFDARRFAGLRFAVRRCGGGSRQASVLKGLLELAEFGATDHDWVLVHDAARPGITPELIRTLVATLKDDPVGGIVALPVADTLKRVPAGGDAIARTESRDALWQAQTPQMFRIGMLREAILQAQREGHDLTDEASAIEWAGHTPRVVQGSLRNFKVTYPEDFALAEAILARPANAS</sequence>